<accession>P50681</accession>
<accession>Q8SEW9</accession>
<feature type="chain" id="PRO_0000082109" description="ATP synthase F(0) complex subunit a">
    <location>
        <begin position="1"/>
        <end position="227"/>
    </location>
</feature>
<feature type="transmembrane region" description="Helical" evidence="2">
    <location>
        <begin position="12"/>
        <end position="32"/>
    </location>
</feature>
<feature type="transmembrane region" description="Helical" evidence="2">
    <location>
        <begin position="69"/>
        <end position="89"/>
    </location>
</feature>
<feature type="transmembrane region" description="Helical" evidence="2">
    <location>
        <begin position="98"/>
        <end position="118"/>
    </location>
</feature>
<feature type="transmembrane region" description="Helical" evidence="2">
    <location>
        <begin position="139"/>
        <end position="159"/>
    </location>
</feature>
<feature type="transmembrane region" description="Helical" evidence="2">
    <location>
        <begin position="170"/>
        <end position="190"/>
    </location>
</feature>
<feature type="transmembrane region" description="Helical" evidence="2">
    <location>
        <begin position="196"/>
        <end position="216"/>
    </location>
</feature>
<proteinExistence type="inferred from homology"/>
<comment type="function">
    <text evidence="1">Subunit a, of the mitochondrial membrane ATP synthase complex (F(1)F(0) ATP synthase or Complex V) that produces ATP from ADP in the presence of a proton gradient across the membrane which is generated by electron transport complexes of the respiratory chain. ATP synthase complex consist of a soluble F(1) head domain - the catalytic core - and a membrane F(1) domain - the membrane proton channel. These two domains are linked by a central stalk rotating inside the F(1) region and a stationary peripheral stalk. During catalysis, ATP synthesis in the catalytic domain of F(1) is coupled via a rotary mechanism of the central stalk subunits to proton translocation. With the subunit c (ATP5MC1), forms the proton-conducting channel in the F(0) domain, that contains two crucial half-channels (inlet and outlet) that facilitate proton movement from the mitochondrial intermembrane space (IMS) into the matrix. Protons are taken up via the inlet half-channel and released through the outlet half-channel, following a Grotthuss mechanism.</text>
</comment>
<comment type="catalytic activity">
    <reaction evidence="1">
        <text>H(+)(in) = H(+)(out)</text>
        <dbReference type="Rhea" id="RHEA:34979"/>
        <dbReference type="ChEBI" id="CHEBI:15378"/>
    </reaction>
</comment>
<comment type="subunit">
    <text evidence="1">Component of the ATP synthase complex composed at least of ATP5F1A/subunit alpha, ATP5F1B/subunit beta, ATP5MC1/subunit c (homooctomer), MT-ATP6/subunit a, MT-ATP8/subunit 8, ATP5ME/subunit e, ATP5MF/subunit f, ATP5MG/subunit g, ATP5MK/subunit k, ATP5MJ/subunit j, ATP5F1C/subunit gamma, ATP5F1D/subunit delta, ATP5F1E/subunit epsilon, ATP5PF/subunit F6, ATP5PB/subunit b, ATP5PD/subunit d, ATP5PO/subunit OSCP. ATP synthase complex consists of a soluble F(1) head domain (subunits alpha(3) and beta(3)) - the catalytic core - and a membrane F(0) domain - the membrane proton channel (subunits c, a, 8, e, f, g, k and j). These two domains are linked by a central stalk (subunits gamma, delta, and epsilon) rotating inside the F1 region and a stationary peripheral stalk (subunits F6, b, d, and OSCP). Interacts with DNAJC30; interaction is direct.</text>
</comment>
<comment type="subcellular location">
    <subcellularLocation>
        <location>Mitochondrion inner membrane</location>
        <topology>Multi-pass membrane protein</topology>
    </subcellularLocation>
</comment>
<comment type="similarity">
    <text evidence="3">Belongs to the ATPase A chain family.</text>
</comment>
<evidence type="ECO:0000250" key="1">
    <source>
        <dbReference type="UniProtKB" id="P00846"/>
    </source>
</evidence>
<evidence type="ECO:0000255" key="2"/>
<evidence type="ECO:0000305" key="3"/>
<geneLocation type="mitochondrion"/>
<organism>
    <name type="scientific">Coturnix japonica</name>
    <name type="common">Japanese quail</name>
    <name type="synonym">Coturnix coturnix japonica</name>
    <dbReference type="NCBI Taxonomy" id="93934"/>
    <lineage>
        <taxon>Eukaryota</taxon>
        <taxon>Metazoa</taxon>
        <taxon>Chordata</taxon>
        <taxon>Craniata</taxon>
        <taxon>Vertebrata</taxon>
        <taxon>Euteleostomi</taxon>
        <taxon>Archelosauria</taxon>
        <taxon>Archosauria</taxon>
        <taxon>Dinosauria</taxon>
        <taxon>Saurischia</taxon>
        <taxon>Theropoda</taxon>
        <taxon>Coelurosauria</taxon>
        <taxon>Aves</taxon>
        <taxon>Neognathae</taxon>
        <taxon>Galloanserae</taxon>
        <taxon>Galliformes</taxon>
        <taxon>Phasianidae</taxon>
        <taxon>Perdicinae</taxon>
        <taxon>Coturnix</taxon>
    </lineage>
</organism>
<reference key="1">
    <citation type="journal article" date="2001" name="Anim. Genet.">
        <title>Complete sequence of the Japanese quail (Coturnix japonica) mitochondrial genome and its genetic relationship with related species.</title>
        <authorList>
            <person name="Nishibori M."/>
            <person name="Hayashi T."/>
            <person name="Tsudzuki M."/>
            <person name="Yamamoto Y."/>
            <person name="Yasue H."/>
        </authorList>
    </citation>
    <scope>NUCLEOTIDE SEQUENCE [GENOMIC DNA]</scope>
    <source>
        <tissue>Blood</tissue>
    </source>
</reference>
<reference key="2">
    <citation type="submission" date="1995-09" db="EMBL/GenBank/DDBJ databases">
        <title>Nucleotide sequence of mitochondrial genes for COI, tRNAs Lys, Asp, Ser (UCN), COII and ATPases 8 and 6 of the quail Coturnix japonica.</title>
        <authorList>
            <person name="Ramirez V."/>
            <person name="Morais R."/>
        </authorList>
    </citation>
    <scope>NUCLEOTIDE SEQUENCE [GENOMIC DNA] OF 1-22</scope>
    <source>
        <tissue>Liver</tissue>
    </source>
</reference>
<protein>
    <recommendedName>
        <fullName evidence="1">ATP synthase F(0) complex subunit a</fullName>
    </recommendedName>
    <alternativeName>
        <fullName>F-ATPase protein 6</fullName>
    </alternativeName>
    <alternativeName>
        <fullName evidence="1">Proton-conducting channel, ATP synthase F(0) complex subunit a</fullName>
    </alternativeName>
</protein>
<sequence>MNLSFFDQFSSPYLMGMPLILPSLLLPTLLFPTPGRRWISNRLSTLQLWVINLITKQLMTPLNKTGHKWALLLTSLILLLLSINLMGLLPYTFTPTTQLSMNMALAFPLWLATLLIGLRNQPSASLAHLLPEGTPTPLIPILIMIETTSLLIRPLALGVRLTANLTAGHLLIQLISTATIALLPTMPSISTLTALILLLLTILEVAVAMIQAYVFVLLLSLYLQENI</sequence>
<dbReference type="EMBL" id="AP003195">
    <property type="protein sequence ID" value="BAB62920.1"/>
    <property type="molecule type" value="Genomic_DNA"/>
</dbReference>
<dbReference type="EMBL" id="U36794">
    <property type="protein sequence ID" value="AAA76732.1"/>
    <property type="molecule type" value="Genomic_DNA"/>
</dbReference>
<dbReference type="RefSeq" id="NP_572019.1">
    <property type="nucleotide sequence ID" value="NC_003408.1"/>
</dbReference>
<dbReference type="SMR" id="P50681"/>
<dbReference type="Ensembl" id="ENSCJPT00005000023.1">
    <property type="protein sequence ID" value="ENSCJPP00005000007.1"/>
    <property type="gene ID" value="ENSCJPG00005000023.1"/>
</dbReference>
<dbReference type="GeneID" id="804661"/>
<dbReference type="KEGG" id="cjo:804661"/>
<dbReference type="CTD" id="4508"/>
<dbReference type="GeneTree" id="ENSGT00390000005568"/>
<dbReference type="OrthoDB" id="5976622at2759"/>
<dbReference type="Proteomes" id="UP000694412">
    <property type="component" value="Unassembled WGS sequence"/>
</dbReference>
<dbReference type="GO" id="GO:0005743">
    <property type="term" value="C:mitochondrial inner membrane"/>
    <property type="evidence" value="ECO:0007669"/>
    <property type="project" value="UniProtKB-SubCell"/>
</dbReference>
<dbReference type="GO" id="GO:0045259">
    <property type="term" value="C:proton-transporting ATP synthase complex"/>
    <property type="evidence" value="ECO:0000250"/>
    <property type="project" value="UniProtKB"/>
</dbReference>
<dbReference type="GO" id="GO:0015252">
    <property type="term" value="F:proton channel activity"/>
    <property type="evidence" value="ECO:0000250"/>
    <property type="project" value="UniProtKB"/>
</dbReference>
<dbReference type="GO" id="GO:0046933">
    <property type="term" value="F:proton-transporting ATP synthase activity, rotational mechanism"/>
    <property type="evidence" value="ECO:0007669"/>
    <property type="project" value="Ensembl"/>
</dbReference>
<dbReference type="GO" id="GO:0015986">
    <property type="term" value="P:proton motive force-driven ATP synthesis"/>
    <property type="evidence" value="ECO:0000250"/>
    <property type="project" value="UniProtKB"/>
</dbReference>
<dbReference type="GO" id="GO:0042776">
    <property type="term" value="P:proton motive force-driven mitochondrial ATP synthesis"/>
    <property type="evidence" value="ECO:0007669"/>
    <property type="project" value="Ensembl"/>
</dbReference>
<dbReference type="GO" id="GO:1902600">
    <property type="term" value="P:proton transmembrane transport"/>
    <property type="evidence" value="ECO:0000250"/>
    <property type="project" value="UniProtKB"/>
</dbReference>
<dbReference type="CDD" id="cd00310">
    <property type="entry name" value="ATP-synt_Fo_a_6"/>
    <property type="match status" value="1"/>
</dbReference>
<dbReference type="FunFam" id="1.20.120.220:FF:000004">
    <property type="entry name" value="ATP synthase subunit a"/>
    <property type="match status" value="1"/>
</dbReference>
<dbReference type="Gene3D" id="1.20.120.220">
    <property type="entry name" value="ATP synthase, F0 complex, subunit A"/>
    <property type="match status" value="1"/>
</dbReference>
<dbReference type="InterPro" id="IPR000568">
    <property type="entry name" value="ATP_synth_F0_asu"/>
</dbReference>
<dbReference type="InterPro" id="IPR023011">
    <property type="entry name" value="ATP_synth_F0_asu_AS"/>
</dbReference>
<dbReference type="InterPro" id="IPR045083">
    <property type="entry name" value="ATP_synth_F0_asu_bact/mt"/>
</dbReference>
<dbReference type="InterPro" id="IPR035908">
    <property type="entry name" value="F0_ATP_A_sf"/>
</dbReference>
<dbReference type="NCBIfam" id="TIGR01131">
    <property type="entry name" value="ATP_synt_6_or_A"/>
    <property type="match status" value="1"/>
</dbReference>
<dbReference type="PANTHER" id="PTHR11410">
    <property type="entry name" value="ATP SYNTHASE SUBUNIT A"/>
    <property type="match status" value="1"/>
</dbReference>
<dbReference type="PANTHER" id="PTHR11410:SF0">
    <property type="entry name" value="ATP SYNTHASE SUBUNIT A"/>
    <property type="match status" value="1"/>
</dbReference>
<dbReference type="Pfam" id="PF00119">
    <property type="entry name" value="ATP-synt_A"/>
    <property type="match status" value="1"/>
</dbReference>
<dbReference type="PRINTS" id="PR00123">
    <property type="entry name" value="ATPASEA"/>
</dbReference>
<dbReference type="SUPFAM" id="SSF81336">
    <property type="entry name" value="F1F0 ATP synthase subunit A"/>
    <property type="match status" value="1"/>
</dbReference>
<dbReference type="PROSITE" id="PS00449">
    <property type="entry name" value="ATPASE_A"/>
    <property type="match status" value="1"/>
</dbReference>
<keyword id="KW-0066">ATP synthesis</keyword>
<keyword id="KW-0138">CF(0)</keyword>
<keyword id="KW-0375">Hydrogen ion transport</keyword>
<keyword id="KW-0406">Ion transport</keyword>
<keyword id="KW-0472">Membrane</keyword>
<keyword id="KW-0496">Mitochondrion</keyword>
<keyword id="KW-0999">Mitochondrion inner membrane</keyword>
<keyword id="KW-1185">Reference proteome</keyword>
<keyword id="KW-0812">Transmembrane</keyword>
<keyword id="KW-1133">Transmembrane helix</keyword>
<keyword id="KW-0813">Transport</keyword>
<gene>
    <name evidence="1" type="primary">MT-ATP6</name>
    <name type="synonym">ATP6</name>
    <name type="synonym">ATPASE6</name>
    <name type="synonym">MTATP6</name>
</gene>
<name>ATP6_COTJA</name>